<proteinExistence type="inferred from homology"/>
<evidence type="ECO:0000255" key="1">
    <source>
        <dbReference type="HAMAP-Rule" id="MF_00735"/>
    </source>
</evidence>
<gene>
    <name evidence="1" type="primary">prmA</name>
    <name type="ordered locus">PsycPRwf_1622</name>
</gene>
<reference key="1">
    <citation type="submission" date="2007-05" db="EMBL/GenBank/DDBJ databases">
        <title>Complete sequence of chromosome of Psychrobacter sp. PRwf-1.</title>
        <authorList>
            <consortium name="US DOE Joint Genome Institute"/>
            <person name="Copeland A."/>
            <person name="Lucas S."/>
            <person name="Lapidus A."/>
            <person name="Barry K."/>
            <person name="Detter J.C."/>
            <person name="Glavina del Rio T."/>
            <person name="Hammon N."/>
            <person name="Israni S."/>
            <person name="Dalin E."/>
            <person name="Tice H."/>
            <person name="Pitluck S."/>
            <person name="Chain P."/>
            <person name="Malfatti S."/>
            <person name="Shin M."/>
            <person name="Vergez L."/>
            <person name="Schmutz J."/>
            <person name="Larimer F."/>
            <person name="Land M."/>
            <person name="Hauser L."/>
            <person name="Kyrpides N."/>
            <person name="Kim E."/>
            <person name="Tiedje J."/>
            <person name="Richardson P."/>
        </authorList>
    </citation>
    <scope>NUCLEOTIDE SEQUENCE [LARGE SCALE GENOMIC DNA]</scope>
    <source>
        <strain>PRwf-1</strain>
    </source>
</reference>
<accession>A5WFX2</accession>
<organism>
    <name type="scientific">Psychrobacter sp. (strain PRwf-1)</name>
    <dbReference type="NCBI Taxonomy" id="349106"/>
    <lineage>
        <taxon>Bacteria</taxon>
        <taxon>Pseudomonadati</taxon>
        <taxon>Pseudomonadota</taxon>
        <taxon>Gammaproteobacteria</taxon>
        <taxon>Moraxellales</taxon>
        <taxon>Moraxellaceae</taxon>
        <taxon>Psychrobacter</taxon>
    </lineage>
</organism>
<name>PRMA_PSYWF</name>
<comment type="function">
    <text evidence="1">Methylates ribosomal protein L11.</text>
</comment>
<comment type="catalytic activity">
    <reaction evidence="1">
        <text>L-lysyl-[protein] + 3 S-adenosyl-L-methionine = N(6),N(6),N(6)-trimethyl-L-lysyl-[protein] + 3 S-adenosyl-L-homocysteine + 3 H(+)</text>
        <dbReference type="Rhea" id="RHEA:54192"/>
        <dbReference type="Rhea" id="RHEA-COMP:9752"/>
        <dbReference type="Rhea" id="RHEA-COMP:13826"/>
        <dbReference type="ChEBI" id="CHEBI:15378"/>
        <dbReference type="ChEBI" id="CHEBI:29969"/>
        <dbReference type="ChEBI" id="CHEBI:57856"/>
        <dbReference type="ChEBI" id="CHEBI:59789"/>
        <dbReference type="ChEBI" id="CHEBI:61961"/>
    </reaction>
</comment>
<comment type="subcellular location">
    <subcellularLocation>
        <location evidence="1">Cytoplasm</location>
    </subcellularLocation>
</comment>
<comment type="similarity">
    <text evidence="1">Belongs to the methyltransferase superfamily. PrmA family.</text>
</comment>
<feature type="chain" id="PRO_1000072794" description="Ribosomal protein L11 methyltransferase">
    <location>
        <begin position="1"/>
        <end position="307"/>
    </location>
</feature>
<feature type="binding site" evidence="1">
    <location>
        <position position="144"/>
    </location>
    <ligand>
        <name>S-adenosyl-L-methionine</name>
        <dbReference type="ChEBI" id="CHEBI:59789"/>
    </ligand>
</feature>
<feature type="binding site" evidence="1">
    <location>
        <position position="165"/>
    </location>
    <ligand>
        <name>S-adenosyl-L-methionine</name>
        <dbReference type="ChEBI" id="CHEBI:59789"/>
    </ligand>
</feature>
<feature type="binding site" evidence="1">
    <location>
        <position position="187"/>
    </location>
    <ligand>
        <name>S-adenosyl-L-methionine</name>
        <dbReference type="ChEBI" id="CHEBI:59789"/>
    </ligand>
</feature>
<feature type="binding site" evidence="1">
    <location>
        <position position="235"/>
    </location>
    <ligand>
        <name>S-adenosyl-L-methionine</name>
        <dbReference type="ChEBI" id="CHEBI:59789"/>
    </ligand>
</feature>
<sequence length="307" mass="34005">MDWQQLHLQCAKQDVDLAESLLLEEGALSISLEDAGDQPLFEPLPGQSPLWDEVILTGLFTADTAQDIESMAQTLAAQVNARRVWTTALADTDWEREWMSHYVPIECTNNLWIVPKWMTPPNPDAVNIMMDPGLAFGTGYHATTRLCLDWLTDQDLSDKVIIDYGCGSGILGIAALLLGAKQVYSVDIDPQAVLATKQNAERNDVTHALEVYLPEDFAKAFAAGDIPKADIITANILAKPLMELAPYLATLIKPKGGIVLAGLISEQLEDMVRAYEPWFNLDTRHSYEKSDDHDDSHWHRLSGTFTG</sequence>
<keyword id="KW-0963">Cytoplasm</keyword>
<keyword id="KW-0489">Methyltransferase</keyword>
<keyword id="KW-0949">S-adenosyl-L-methionine</keyword>
<keyword id="KW-0808">Transferase</keyword>
<dbReference type="EC" id="2.1.1.-" evidence="1"/>
<dbReference type="EMBL" id="CP000713">
    <property type="protein sequence ID" value="ABQ94563.1"/>
    <property type="molecule type" value="Genomic_DNA"/>
</dbReference>
<dbReference type="SMR" id="A5WFX2"/>
<dbReference type="STRING" id="349106.PsycPRwf_1622"/>
<dbReference type="KEGG" id="prw:PsycPRwf_1622"/>
<dbReference type="eggNOG" id="COG2264">
    <property type="taxonomic scope" value="Bacteria"/>
</dbReference>
<dbReference type="HOGENOM" id="CLU_049382_4_1_6"/>
<dbReference type="GO" id="GO:0005829">
    <property type="term" value="C:cytosol"/>
    <property type="evidence" value="ECO:0007669"/>
    <property type="project" value="TreeGrafter"/>
</dbReference>
<dbReference type="GO" id="GO:0016279">
    <property type="term" value="F:protein-lysine N-methyltransferase activity"/>
    <property type="evidence" value="ECO:0007669"/>
    <property type="project" value="TreeGrafter"/>
</dbReference>
<dbReference type="GO" id="GO:0032259">
    <property type="term" value="P:methylation"/>
    <property type="evidence" value="ECO:0007669"/>
    <property type="project" value="UniProtKB-KW"/>
</dbReference>
<dbReference type="CDD" id="cd02440">
    <property type="entry name" value="AdoMet_MTases"/>
    <property type="match status" value="1"/>
</dbReference>
<dbReference type="Gene3D" id="3.40.50.150">
    <property type="entry name" value="Vaccinia Virus protein VP39"/>
    <property type="match status" value="1"/>
</dbReference>
<dbReference type="HAMAP" id="MF_00735">
    <property type="entry name" value="Methyltr_PrmA"/>
    <property type="match status" value="1"/>
</dbReference>
<dbReference type="InterPro" id="IPR050078">
    <property type="entry name" value="Ribosomal_L11_MeTrfase_PrmA"/>
</dbReference>
<dbReference type="InterPro" id="IPR004498">
    <property type="entry name" value="Ribosomal_PrmA_MeTrfase"/>
</dbReference>
<dbReference type="InterPro" id="IPR029063">
    <property type="entry name" value="SAM-dependent_MTases_sf"/>
</dbReference>
<dbReference type="NCBIfam" id="TIGR00406">
    <property type="entry name" value="prmA"/>
    <property type="match status" value="1"/>
</dbReference>
<dbReference type="PANTHER" id="PTHR43648">
    <property type="entry name" value="ELECTRON TRANSFER FLAVOPROTEIN BETA SUBUNIT LYSINE METHYLTRANSFERASE"/>
    <property type="match status" value="1"/>
</dbReference>
<dbReference type="PANTHER" id="PTHR43648:SF1">
    <property type="entry name" value="ELECTRON TRANSFER FLAVOPROTEIN BETA SUBUNIT LYSINE METHYLTRANSFERASE"/>
    <property type="match status" value="1"/>
</dbReference>
<dbReference type="Pfam" id="PF06325">
    <property type="entry name" value="PrmA"/>
    <property type="match status" value="1"/>
</dbReference>
<dbReference type="PIRSF" id="PIRSF000401">
    <property type="entry name" value="RPL11_MTase"/>
    <property type="match status" value="1"/>
</dbReference>
<dbReference type="SUPFAM" id="SSF53335">
    <property type="entry name" value="S-adenosyl-L-methionine-dependent methyltransferases"/>
    <property type="match status" value="1"/>
</dbReference>
<protein>
    <recommendedName>
        <fullName evidence="1">Ribosomal protein L11 methyltransferase</fullName>
        <shortName evidence="1">L11 Mtase</shortName>
        <ecNumber evidence="1">2.1.1.-</ecNumber>
    </recommendedName>
</protein>